<dbReference type="EMBL" id="CM001234">
    <property type="protein sequence ID" value="EHA49760.1"/>
    <property type="molecule type" value="Genomic_DNA"/>
</dbReference>
<dbReference type="EMBL" id="CM001234">
    <property type="protein sequence ID" value="EHA49761.1"/>
    <property type="molecule type" value="Genomic_DNA"/>
</dbReference>
<dbReference type="RefSeq" id="XP_003716079.1">
    <property type="nucleotide sequence ID" value="XM_003716031.1"/>
</dbReference>
<dbReference type="RefSeq" id="XP_003716080.1">
    <property type="nucleotide sequence ID" value="XM_003716032.1"/>
</dbReference>
<dbReference type="STRING" id="242507.A4QYF9"/>
<dbReference type="EnsemblFungi" id="MGG_08560T0">
    <property type="protein sequence ID" value="MGG_08560T0"/>
    <property type="gene ID" value="MGG_08560"/>
</dbReference>
<dbReference type="EnsemblFungi" id="MGG_08560T1">
    <property type="protein sequence ID" value="MGG_08560T1"/>
    <property type="gene ID" value="MGG_08560"/>
</dbReference>
<dbReference type="GeneID" id="2678668"/>
<dbReference type="KEGG" id="mgr:MGG_08560"/>
<dbReference type="VEuPathDB" id="FungiDB:MGG_08560"/>
<dbReference type="eggNOG" id="ENOG502SCUM">
    <property type="taxonomic scope" value="Eukaryota"/>
</dbReference>
<dbReference type="HOGENOM" id="CLU_130004_1_0_1"/>
<dbReference type="InParanoid" id="A4QYF9"/>
<dbReference type="OMA" id="MEGVQDP"/>
<dbReference type="OrthoDB" id="2148987at2759"/>
<dbReference type="PHI-base" id="PHI:883"/>
<dbReference type="Proteomes" id="UP000009058">
    <property type="component" value="Chromosome 4"/>
</dbReference>
<dbReference type="GO" id="GO:0005634">
    <property type="term" value="C:nucleus"/>
    <property type="evidence" value="ECO:0007669"/>
    <property type="project" value="UniProtKB-SubCell"/>
</dbReference>
<dbReference type="InterPro" id="IPR019098">
    <property type="entry name" value="Histone_chaperone_domain_CHZ"/>
</dbReference>
<dbReference type="Pfam" id="PF09649">
    <property type="entry name" value="CHZ"/>
    <property type="match status" value="1"/>
</dbReference>
<dbReference type="SMART" id="SM01082">
    <property type="entry name" value="CHZ"/>
    <property type="match status" value="1"/>
</dbReference>
<reference key="1">
    <citation type="journal article" date="2005" name="Nature">
        <title>The genome sequence of the rice blast fungus Magnaporthe grisea.</title>
        <authorList>
            <person name="Dean R.A."/>
            <person name="Talbot N.J."/>
            <person name="Ebbole D.J."/>
            <person name="Farman M.L."/>
            <person name="Mitchell T.K."/>
            <person name="Orbach M.J."/>
            <person name="Thon M.R."/>
            <person name="Kulkarni R."/>
            <person name="Xu J.-R."/>
            <person name="Pan H."/>
            <person name="Read N.D."/>
            <person name="Lee Y.-H."/>
            <person name="Carbone I."/>
            <person name="Brown D."/>
            <person name="Oh Y.Y."/>
            <person name="Donofrio N."/>
            <person name="Jeong J.S."/>
            <person name="Soanes D.M."/>
            <person name="Djonovic S."/>
            <person name="Kolomiets E."/>
            <person name="Rehmeyer C."/>
            <person name="Li W."/>
            <person name="Harding M."/>
            <person name="Kim S."/>
            <person name="Lebrun M.-H."/>
            <person name="Bohnert H."/>
            <person name="Coughlan S."/>
            <person name="Butler J."/>
            <person name="Calvo S.E."/>
            <person name="Ma L.-J."/>
            <person name="Nicol R."/>
            <person name="Purcell S."/>
            <person name="Nusbaum C."/>
            <person name="Galagan J.E."/>
            <person name="Birren B.W."/>
        </authorList>
    </citation>
    <scope>NUCLEOTIDE SEQUENCE [LARGE SCALE GENOMIC DNA]</scope>
    <source>
        <strain>70-15 / ATCC MYA-4617 / FGSC 8958</strain>
    </source>
</reference>
<organism>
    <name type="scientific">Pyricularia oryzae (strain 70-15 / ATCC MYA-4617 / FGSC 8958)</name>
    <name type="common">Rice blast fungus</name>
    <name type="synonym">Magnaporthe oryzae</name>
    <dbReference type="NCBI Taxonomy" id="242507"/>
    <lineage>
        <taxon>Eukaryota</taxon>
        <taxon>Fungi</taxon>
        <taxon>Dikarya</taxon>
        <taxon>Ascomycota</taxon>
        <taxon>Pezizomycotina</taxon>
        <taxon>Sordariomycetes</taxon>
        <taxon>Sordariomycetidae</taxon>
        <taxon>Magnaporthales</taxon>
        <taxon>Pyriculariaceae</taxon>
        <taxon>Pyricularia</taxon>
    </lineage>
</organism>
<protein>
    <recommendedName>
        <fullName>Histone H2A.Z-specific chaperone CHZ1</fullName>
    </recommendedName>
</protein>
<name>CHZ1_PYRO7</name>
<accession>A4QYF9</accession>
<accession>G4N637</accession>
<sequence length="121" mass="12999">MASEETGVTAPGAQEVANAGVASEAKGKGKGPAQDTHDTEMDEDDEDDTEADEAEQVAEEVEDDGMDEIDSSNVLPSRTRGRKIDFAKAAAEQNLSVDDDEEDDDDDFNDPDAEDDKMDED</sequence>
<comment type="function">
    <text evidence="1">Forms a chaperone-bound H2A.Z-H2B complex that acts as a source for SWR1 complex-dependent H2A to H2A.Z histone replacement in chromatin.</text>
</comment>
<comment type="subunit">
    <text evidence="1">Forms a heterotrimer with H2A.Z-H2B, stabilizing the association of the histone dimer. Also, with a lower affinity, forms a heterotrimer with H2A-H2B (By similarity).</text>
</comment>
<comment type="subcellular location">
    <subcellularLocation>
        <location evidence="1">Nucleus</location>
    </subcellularLocation>
</comment>
<comment type="similarity">
    <text evidence="3">Belongs to the CHZ1 family.</text>
</comment>
<feature type="chain" id="PRO_0000330214" description="Histone H2A.Z-specific chaperone CHZ1">
    <location>
        <begin position="1"/>
        <end position="121"/>
    </location>
</feature>
<feature type="region of interest" description="Disordered" evidence="2">
    <location>
        <begin position="1"/>
        <end position="121"/>
    </location>
</feature>
<feature type="compositionally biased region" description="Acidic residues" evidence="2">
    <location>
        <begin position="40"/>
        <end position="70"/>
    </location>
</feature>
<feature type="compositionally biased region" description="Acidic residues" evidence="2">
    <location>
        <begin position="97"/>
        <end position="121"/>
    </location>
</feature>
<proteinExistence type="inferred from homology"/>
<gene>
    <name type="primary">CHZ1</name>
    <name type="ORF">MGG_08560</name>
</gene>
<evidence type="ECO:0000250" key="1"/>
<evidence type="ECO:0000256" key="2">
    <source>
        <dbReference type="SAM" id="MobiDB-lite"/>
    </source>
</evidence>
<evidence type="ECO:0000305" key="3"/>
<keyword id="KW-0143">Chaperone</keyword>
<keyword id="KW-0539">Nucleus</keyword>
<keyword id="KW-1185">Reference proteome</keyword>